<protein>
    <recommendedName>
        <fullName>Prostaglandin D2 receptor 2</fullName>
    </recommendedName>
    <alternativeName>
        <fullName>Chemoattractant receptor-homologous molecule expressed on Th2 cells</fullName>
    </alternativeName>
    <alternativeName>
        <fullName>G-protein coupled receptor 44</fullName>
    </alternativeName>
    <cdAntigenName>CD294</cdAntigenName>
</protein>
<keyword id="KW-1003">Cell membrane</keyword>
<keyword id="KW-1015">Disulfide bond</keyword>
<keyword id="KW-0297">G-protein coupled receptor</keyword>
<keyword id="KW-0325">Glycoprotein</keyword>
<keyword id="KW-0472">Membrane</keyword>
<keyword id="KW-0597">Phosphoprotein</keyword>
<keyword id="KW-0675">Receptor</keyword>
<keyword id="KW-1185">Reference proteome</keyword>
<keyword id="KW-0807">Transducer</keyword>
<keyword id="KW-0812">Transmembrane</keyword>
<keyword id="KW-1133">Transmembrane helix</keyword>
<feature type="chain" id="PRO_0000069573" description="Prostaglandin D2 receptor 2">
    <location>
        <begin position="1"/>
        <end position="382"/>
    </location>
</feature>
<feature type="topological domain" description="Extracellular" evidence="3">
    <location>
        <begin position="1"/>
        <end position="32"/>
    </location>
</feature>
<feature type="transmembrane region" description="Helical; Name=1" evidence="3">
    <location>
        <begin position="33"/>
        <end position="55"/>
    </location>
</feature>
<feature type="topological domain" description="Cytoplasmic" evidence="3">
    <location>
        <begin position="56"/>
        <end position="66"/>
    </location>
</feature>
<feature type="transmembrane region" description="Helical; Name=2" evidence="3">
    <location>
        <begin position="67"/>
        <end position="88"/>
    </location>
</feature>
<feature type="topological domain" description="Extracellular" evidence="3">
    <location>
        <begin position="89"/>
        <end position="105"/>
    </location>
</feature>
<feature type="transmembrane region" description="Helical; Name=3" evidence="3">
    <location>
        <begin position="106"/>
        <end position="126"/>
    </location>
</feature>
<feature type="topological domain" description="Cytoplasmic" evidence="3">
    <location>
        <begin position="127"/>
        <end position="145"/>
    </location>
</feature>
<feature type="transmembrane region" description="Helical; Name=4" evidence="3">
    <location>
        <begin position="146"/>
        <end position="167"/>
    </location>
</feature>
<feature type="topological domain" description="Extracellular" evidence="3">
    <location>
        <begin position="168"/>
        <end position="209"/>
    </location>
</feature>
<feature type="transmembrane region" description="Helical; Name=5" evidence="3">
    <location>
        <begin position="210"/>
        <end position="230"/>
    </location>
</feature>
<feature type="topological domain" description="Cytoplasmic" evidence="3">
    <location>
        <begin position="231"/>
        <end position="246"/>
    </location>
</feature>
<feature type="transmembrane region" description="Helical; Name=6" evidence="3">
    <location>
        <begin position="247"/>
        <end position="268"/>
    </location>
</feature>
<feature type="topological domain" description="Extracellular" evidence="3">
    <location>
        <begin position="269"/>
        <end position="287"/>
    </location>
</feature>
<feature type="transmembrane region" description="Helical; Name=7" evidence="3">
    <location>
        <begin position="288"/>
        <end position="307"/>
    </location>
</feature>
<feature type="topological domain" description="Cytoplasmic" evidence="3">
    <location>
        <begin position="308"/>
        <end position="357"/>
    </location>
</feature>
<feature type="short sequence motif" description="Involved in the recycling of CRTH2" evidence="1">
    <location>
        <begin position="329"/>
        <end position="332"/>
    </location>
</feature>
<feature type="modified residue" description="Phosphoserine" evidence="2">
    <location>
        <position position="330"/>
    </location>
</feature>
<feature type="modified residue" description="Phosphoserine" evidence="7">
    <location>
        <position position="344"/>
    </location>
</feature>
<feature type="glycosylation site" description="N-linked (GlcNAc...) asparagine" evidence="3">
    <location>
        <position position="3"/>
    </location>
</feature>
<feature type="glycosylation site" description="N-linked (GlcNAc...) asparagine" evidence="3">
    <location>
        <position position="21"/>
    </location>
</feature>
<feature type="glycosylation site" description="N-linked (GlcNAc...) asparagine" evidence="3">
    <location>
        <position position="24"/>
    </location>
</feature>
<feature type="disulfide bond" evidence="4">
    <location>
        <begin position="103"/>
        <end position="181"/>
    </location>
</feature>
<name>PD2R2_MOUSE</name>
<organism>
    <name type="scientific">Mus musculus</name>
    <name type="common">Mouse</name>
    <dbReference type="NCBI Taxonomy" id="10090"/>
    <lineage>
        <taxon>Eukaryota</taxon>
        <taxon>Metazoa</taxon>
        <taxon>Chordata</taxon>
        <taxon>Craniata</taxon>
        <taxon>Vertebrata</taxon>
        <taxon>Euteleostomi</taxon>
        <taxon>Mammalia</taxon>
        <taxon>Eutheria</taxon>
        <taxon>Euarchontoglires</taxon>
        <taxon>Glires</taxon>
        <taxon>Rodentia</taxon>
        <taxon>Myomorpha</taxon>
        <taxon>Muroidea</taxon>
        <taxon>Muridae</taxon>
        <taxon>Murinae</taxon>
        <taxon>Mus</taxon>
        <taxon>Mus</taxon>
    </lineage>
</organism>
<accession>Q9Z2J6</accession>
<accession>Q54A00</accession>
<dbReference type="EMBL" id="AF054507">
    <property type="protein sequence ID" value="AAD13525.1"/>
    <property type="molecule type" value="Genomic_DNA"/>
</dbReference>
<dbReference type="EMBL" id="AB109091">
    <property type="protein sequence ID" value="BAC81436.1"/>
    <property type="molecule type" value="Genomic_DNA"/>
</dbReference>
<dbReference type="EMBL" id="AB109092">
    <property type="protein sequence ID" value="BAC81437.1"/>
    <property type="molecule type" value="mRNA"/>
</dbReference>
<dbReference type="EMBL" id="CH466534">
    <property type="protein sequence ID" value="EDL41395.1"/>
    <property type="molecule type" value="Genomic_DNA"/>
</dbReference>
<dbReference type="EMBL" id="BC111906">
    <property type="protein sequence ID" value="AAI11907.1"/>
    <property type="molecule type" value="mRNA"/>
</dbReference>
<dbReference type="CCDS" id="CCDS29592.1"/>
<dbReference type="RefSeq" id="NP_034092.1">
    <property type="nucleotide sequence ID" value="NM_009962.3"/>
</dbReference>
<dbReference type="RefSeq" id="XP_006526758.1">
    <property type="nucleotide sequence ID" value="XM_006526695.5"/>
</dbReference>
<dbReference type="RefSeq" id="XP_006526759.1">
    <property type="nucleotide sequence ID" value="XM_006526696.5"/>
</dbReference>
<dbReference type="RefSeq" id="XP_011245450.1">
    <property type="nucleotide sequence ID" value="XM_011247148.4"/>
</dbReference>
<dbReference type="SMR" id="Q9Z2J6"/>
<dbReference type="FunCoup" id="Q9Z2J6">
    <property type="interactions" value="748"/>
</dbReference>
<dbReference type="STRING" id="10090.ENSMUSP00000036159"/>
<dbReference type="BindingDB" id="Q9Z2J6"/>
<dbReference type="ChEMBL" id="CHEMBL2291"/>
<dbReference type="DrugCentral" id="Q9Z2J6"/>
<dbReference type="GuidetoPHARMACOLOGY" id="339"/>
<dbReference type="GlyCosmos" id="Q9Z2J6">
    <property type="glycosylation" value="3 sites, No reported glycans"/>
</dbReference>
<dbReference type="GlyGen" id="Q9Z2J6">
    <property type="glycosylation" value="4 sites"/>
</dbReference>
<dbReference type="iPTMnet" id="Q9Z2J6"/>
<dbReference type="PhosphoSitePlus" id="Q9Z2J6"/>
<dbReference type="PaxDb" id="10090-ENSMUSP00000036159"/>
<dbReference type="ProteomicsDB" id="289331"/>
<dbReference type="Antibodypedia" id="2960">
    <property type="antibodies" value="656 antibodies from 40 providers"/>
</dbReference>
<dbReference type="DNASU" id="14764"/>
<dbReference type="Ensembl" id="ENSMUST00000037261.4">
    <property type="protein sequence ID" value="ENSMUSP00000036159.4"/>
    <property type="gene ID" value="ENSMUSG00000034117.4"/>
</dbReference>
<dbReference type="GeneID" id="14764"/>
<dbReference type="KEGG" id="mmu:14764"/>
<dbReference type="UCSC" id="uc008gri.1">
    <property type="organism name" value="mouse"/>
</dbReference>
<dbReference type="AGR" id="MGI:1330275"/>
<dbReference type="CTD" id="11251"/>
<dbReference type="MGI" id="MGI:1330275">
    <property type="gene designation" value="Ptgdr2"/>
</dbReference>
<dbReference type="VEuPathDB" id="HostDB:ENSMUSG00000034117"/>
<dbReference type="eggNOG" id="ENOG502QTYS">
    <property type="taxonomic scope" value="Eukaryota"/>
</dbReference>
<dbReference type="GeneTree" id="ENSGT00940000162009"/>
<dbReference type="HOGENOM" id="CLU_009579_8_0_1"/>
<dbReference type="InParanoid" id="Q9Z2J6"/>
<dbReference type="OMA" id="CPDLCRK"/>
<dbReference type="OrthoDB" id="10008828at2759"/>
<dbReference type="PhylomeDB" id="Q9Z2J6"/>
<dbReference type="TreeFam" id="TF330976"/>
<dbReference type="Reactome" id="R-MMU-391908">
    <property type="pathway name" value="Prostanoid ligand receptors"/>
</dbReference>
<dbReference type="Reactome" id="R-MMU-418594">
    <property type="pathway name" value="G alpha (i) signalling events"/>
</dbReference>
<dbReference type="BioGRID-ORCS" id="14764">
    <property type="hits" value="3 hits in 78 CRISPR screens"/>
</dbReference>
<dbReference type="PRO" id="PR:Q9Z2J6"/>
<dbReference type="Proteomes" id="UP000000589">
    <property type="component" value="Chromosome 19"/>
</dbReference>
<dbReference type="RNAct" id="Q9Z2J6">
    <property type="molecule type" value="protein"/>
</dbReference>
<dbReference type="Bgee" id="ENSMUSG00000034117">
    <property type="expression patterns" value="Expressed in tracheobronchial tree and 12 other cell types or tissues"/>
</dbReference>
<dbReference type="GO" id="GO:0005886">
    <property type="term" value="C:plasma membrane"/>
    <property type="evidence" value="ECO:0000250"/>
    <property type="project" value="MGI"/>
</dbReference>
<dbReference type="GO" id="GO:0004930">
    <property type="term" value="F:G protein-coupled receptor activity"/>
    <property type="evidence" value="ECO:0000314"/>
    <property type="project" value="MGI"/>
</dbReference>
<dbReference type="GO" id="GO:0004956">
    <property type="term" value="F:prostaglandin D receptor activity"/>
    <property type="evidence" value="ECO:0000314"/>
    <property type="project" value="MGI"/>
</dbReference>
<dbReference type="GO" id="GO:0004958">
    <property type="term" value="F:prostaglandin F receptor activity"/>
    <property type="evidence" value="ECO:0000314"/>
    <property type="project" value="MGI"/>
</dbReference>
<dbReference type="GO" id="GO:0001785">
    <property type="term" value="F:prostaglandin J receptor activity"/>
    <property type="evidence" value="ECO:0000314"/>
    <property type="project" value="MGI"/>
</dbReference>
<dbReference type="GO" id="GO:0007193">
    <property type="term" value="P:adenylate cyclase-inhibiting G protein-coupled receptor signaling pathway"/>
    <property type="evidence" value="ECO:0000314"/>
    <property type="project" value="MGI"/>
</dbReference>
<dbReference type="GO" id="GO:0019722">
    <property type="term" value="P:calcium-mediated signaling"/>
    <property type="evidence" value="ECO:0000314"/>
    <property type="project" value="MGI"/>
</dbReference>
<dbReference type="GO" id="GO:0006935">
    <property type="term" value="P:chemotaxis"/>
    <property type="evidence" value="ECO:0000314"/>
    <property type="project" value="MGI"/>
</dbReference>
<dbReference type="GO" id="GO:0007186">
    <property type="term" value="P:G protein-coupled receptor signaling pathway"/>
    <property type="evidence" value="ECO:0000250"/>
    <property type="project" value="MGI"/>
</dbReference>
<dbReference type="GO" id="GO:2000255">
    <property type="term" value="P:negative regulation of male germ cell proliferation"/>
    <property type="evidence" value="ECO:0000315"/>
    <property type="project" value="MGI"/>
</dbReference>
<dbReference type="GO" id="GO:0045745">
    <property type="term" value="P:positive regulation of G protein-coupled receptor signaling pathway"/>
    <property type="evidence" value="ECO:0000314"/>
    <property type="project" value="MGI"/>
</dbReference>
<dbReference type="FunFam" id="1.20.1070.10:FF:000034">
    <property type="entry name" value="G-protein coupled receptor 1"/>
    <property type="match status" value="1"/>
</dbReference>
<dbReference type="Gene3D" id="1.20.1070.10">
    <property type="entry name" value="Rhodopsin 7-helix transmembrane proteins"/>
    <property type="match status" value="1"/>
</dbReference>
<dbReference type="InterPro" id="IPR000826">
    <property type="entry name" value="Formyl_rcpt-rel"/>
</dbReference>
<dbReference type="InterPro" id="IPR000276">
    <property type="entry name" value="GPCR_Rhodpsn"/>
</dbReference>
<dbReference type="InterPro" id="IPR017452">
    <property type="entry name" value="GPCR_Rhodpsn_7TM"/>
</dbReference>
<dbReference type="PANTHER" id="PTHR24225">
    <property type="entry name" value="CHEMOTACTIC RECEPTOR"/>
    <property type="match status" value="1"/>
</dbReference>
<dbReference type="PANTHER" id="PTHR24225:SF72">
    <property type="entry name" value="G-PROTEIN COUPLED RECEPTORS FAMILY 1 PROFILE DOMAIN-CONTAINING PROTEIN-RELATED"/>
    <property type="match status" value="1"/>
</dbReference>
<dbReference type="Pfam" id="PF00001">
    <property type="entry name" value="7tm_1"/>
    <property type="match status" value="1"/>
</dbReference>
<dbReference type="PRINTS" id="PR00526">
    <property type="entry name" value="FMETLEUPHER"/>
</dbReference>
<dbReference type="PRINTS" id="PR00237">
    <property type="entry name" value="GPCRRHODOPSN"/>
</dbReference>
<dbReference type="SUPFAM" id="SSF81321">
    <property type="entry name" value="Family A G protein-coupled receptor-like"/>
    <property type="match status" value="1"/>
</dbReference>
<dbReference type="PROSITE" id="PS00237">
    <property type="entry name" value="G_PROTEIN_RECEP_F1_1"/>
    <property type="match status" value="1"/>
</dbReference>
<dbReference type="PROSITE" id="PS50262">
    <property type="entry name" value="G_PROTEIN_RECEP_F1_2"/>
    <property type="match status" value="1"/>
</dbReference>
<sequence>MANVTLKPLCPLLEEMVQLPNHSNSSLRYIDHVSVLLHGLASLLGLVENGLILFVVGCRMRQTVVTTWVLHLALSDLLAAASLPFFTYFLAVGHSWELGTTFCKLHSSVFFLNMFASGFLLSAISLDRCLQVVRPVWAQNHRTVAVAHRVCLMLWALAVLNTIPYFVFRDTIPRLDGRIMCYYNLLLWNPGPDRDTTCDYRQKALAVSKFLLAFMVPLAIIASSHVAVSLRLHHRGRQRTGRFVRLVAAIVVAFVLCWGPYHIFSLLEARAHSVTTLRQLASRGLPFVTSLAFFNSVVNPLLYVFTCPDMLYKLRRSLRAVLESVLVEDSDQSGGLRNRRRRASSTATPASTLLLADRIPQLRPTRLIGWMRRGSAEVPQRV</sequence>
<reference key="1">
    <citation type="journal article" date="1999" name="Gene">
        <title>Molecular cloning, chromosome mapping and characterization of the mouse CRTH2 gene, a putative member of the leukocyte chemoattractant receptor family.</title>
        <authorList>
            <person name="Abe H."/>
            <person name="Takeshita T."/>
            <person name="Nagata K."/>
            <person name="Arita T."/>
            <person name="Endo Y."/>
            <person name="Fujita T."/>
            <person name="Takayama H."/>
            <person name="Kubo M."/>
            <person name="Sugamura K."/>
        </authorList>
    </citation>
    <scope>NUCLEOTIDE SEQUENCE [GENOMIC DNA]</scope>
    <source>
        <strain>129/SvJ</strain>
    </source>
</reference>
<reference key="2">
    <citation type="journal article" date="2003" name="Biochem. Biophys. Res. Commun.">
        <title>Gene structure and functional properties of mouse CRTH2, a prostaglandin D2 receptor.</title>
        <authorList>
            <person name="Hirai H."/>
            <person name="Abe H."/>
            <person name="Tanaka K."/>
            <person name="Takatsu K."/>
            <person name="Sugamura K."/>
            <person name="Nakamura M."/>
            <person name="Nagata K."/>
        </authorList>
    </citation>
    <scope>NUCLEOTIDE SEQUENCE [GENOMIC DNA / MRNA]</scope>
    <scope>FUNCTION AS RECEPTOR FOR PGD2</scope>
    <scope>CHARACTERIZATION</scope>
</reference>
<reference key="3">
    <citation type="submission" date="2005-07" db="EMBL/GenBank/DDBJ databases">
        <authorList>
            <person name="Mural R.J."/>
            <person name="Adams M.D."/>
            <person name="Myers E.W."/>
            <person name="Smith H.O."/>
            <person name="Venter J.C."/>
        </authorList>
    </citation>
    <scope>NUCLEOTIDE SEQUENCE [LARGE SCALE GENOMIC DNA]</scope>
</reference>
<reference key="4">
    <citation type="journal article" date="2004" name="Genome Res.">
        <title>The status, quality, and expansion of the NIH full-length cDNA project: the Mammalian Gene Collection (MGC).</title>
        <authorList>
            <consortium name="The MGC Project Team"/>
        </authorList>
    </citation>
    <scope>NUCLEOTIDE SEQUENCE [LARGE SCALE MRNA]</scope>
</reference>
<reference key="5">
    <citation type="journal article" date="2006" name="J. Immunol.">
        <title>Prostaglandin D2 plays an essential role in chronic allergic inflammation of the skin via CRTH2 receptor.</title>
        <authorList>
            <person name="Satoh T."/>
            <person name="Moroi R."/>
            <person name="Aritake K."/>
            <person name="Urade Y."/>
            <person name="Kanai Y."/>
            <person name="Sumi K."/>
            <person name="Yokozeki H."/>
            <person name="Hirai H."/>
            <person name="Nagata K."/>
            <person name="Hara T."/>
            <person name="Utsuyama M."/>
            <person name="Hirokawa K."/>
            <person name="Sugamura K."/>
            <person name="Nishioka K."/>
            <person name="Nakamura M."/>
        </authorList>
    </citation>
    <scope>DISRUPTION PHENOTYPE</scope>
    <scope>FUNCTION</scope>
</reference>
<reference key="6">
    <citation type="journal article" date="2010" name="Cell">
        <title>A tissue-specific atlas of mouse protein phosphorylation and expression.</title>
        <authorList>
            <person name="Huttlin E.L."/>
            <person name="Jedrychowski M.P."/>
            <person name="Elias J.E."/>
            <person name="Goswami T."/>
            <person name="Rad R."/>
            <person name="Beausoleil S.A."/>
            <person name="Villen J."/>
            <person name="Haas W."/>
            <person name="Sowa M.E."/>
            <person name="Gygi S.P."/>
        </authorList>
    </citation>
    <scope>PHOSPHORYLATION [LARGE SCALE ANALYSIS] AT SER-344</scope>
    <scope>IDENTIFICATION BY MASS SPECTROMETRY [LARGE SCALE ANALYSIS]</scope>
    <source>
        <tissue>Spleen</tissue>
    </source>
</reference>
<gene>
    <name type="primary">Ptgdr2</name>
    <name type="synonym">Crth2</name>
    <name type="synonym">Gpr44</name>
</gene>
<comment type="function">
    <text evidence="1 5 6">Receptor for prostaglandin D2 (PGD2). Coupled to the G(i)-protein. Receptor activation may result in pertussis toxin-sensitive decreases in cAMP levels and Ca(2+) mobilization. PI3K signaling is also implicated in mediating PTGDR2 effects. PGD2 induced receptor internalization. CRTH2 internalization can be regulated by diverse kinases such as, PKC, PKA, GRK2, GPRK5/GRK5 and GRK6. Receptor activation is responsible, at least in part, in immune regulation and allergic/inflammation responses (By similarity).</text>
</comment>
<comment type="subcellular location">
    <subcellularLocation>
        <location evidence="1">Cell membrane</location>
        <topology evidence="1">Multi-pass membrane protein</topology>
    </subcellularLocation>
    <text evidence="1">Internalized receptors colocalized with RAB11A.</text>
</comment>
<comment type="domain">
    <text evidence="1">The 329-DSEL-332 motif is involved in the recycling of PTGDR2 to the cell surface after agonist-induced internalization. This motif seems to be required for GRK2 and GPRK5/GRK5 to promote agonist-induced internalization (By similarity). Thr-346 is a major site for PKC-induced internalization of the receptor (By similarity).</text>
</comment>
<comment type="PTM">
    <text evidence="1">Phosphorylated.</text>
</comment>
<comment type="disruption phenotype">
    <text evidence="6">Deficient mice are fertile and grew normally. Ear-swelling responses induced by hapten-specific IgE are less pronounced in deficient mice, giving 35-55% of the responses of normal mice. The reduction in cutaneous responses is associated with decreased infiltration of lymphocytes, eosinophils, and basophils and decreased production of macrophage-derived chemokine and RANTES at inflammatory sites. In models of chronic contact hypersensitivity induced by repeated hapten application, CRTH2-deficient mice result in a reduction by approximately half of skin responses and low levels (63% of control) of serum IgE production.</text>
</comment>
<comment type="similarity">
    <text evidence="4">Belongs to the G-protein coupled receptor 1 family.</text>
</comment>
<proteinExistence type="evidence at protein level"/>
<evidence type="ECO:0000250" key="1"/>
<evidence type="ECO:0000250" key="2">
    <source>
        <dbReference type="UniProtKB" id="Q6XKD3"/>
    </source>
</evidence>
<evidence type="ECO:0000255" key="3"/>
<evidence type="ECO:0000255" key="4">
    <source>
        <dbReference type="PROSITE-ProRule" id="PRU00521"/>
    </source>
</evidence>
<evidence type="ECO:0000269" key="5">
    <source>
    </source>
</evidence>
<evidence type="ECO:0000269" key="6">
    <source>
    </source>
</evidence>
<evidence type="ECO:0007744" key="7">
    <source>
    </source>
</evidence>